<protein>
    <recommendedName>
        <fullName evidence="1">ATP-dependent protease ATPase subunit HslU</fullName>
    </recommendedName>
    <alternativeName>
        <fullName evidence="1">Unfoldase HslU</fullName>
    </alternativeName>
</protein>
<keyword id="KW-0067">ATP-binding</keyword>
<keyword id="KW-0143">Chaperone</keyword>
<keyword id="KW-0963">Cytoplasm</keyword>
<keyword id="KW-0547">Nucleotide-binding</keyword>
<keyword id="KW-0346">Stress response</keyword>
<accession>Q1CU15</accession>
<dbReference type="EMBL" id="CP000241">
    <property type="protein sequence ID" value="ABF84557.1"/>
    <property type="molecule type" value="Genomic_DNA"/>
</dbReference>
<dbReference type="RefSeq" id="WP_000040791.1">
    <property type="nucleotide sequence ID" value="NC_008086.1"/>
</dbReference>
<dbReference type="SMR" id="Q1CU15"/>
<dbReference type="KEGG" id="hpa:HPAG1_0490"/>
<dbReference type="HOGENOM" id="CLU_033123_0_0_7"/>
<dbReference type="GO" id="GO:0009376">
    <property type="term" value="C:HslUV protease complex"/>
    <property type="evidence" value="ECO:0007669"/>
    <property type="project" value="UniProtKB-UniRule"/>
</dbReference>
<dbReference type="GO" id="GO:0005524">
    <property type="term" value="F:ATP binding"/>
    <property type="evidence" value="ECO:0007669"/>
    <property type="project" value="UniProtKB-UniRule"/>
</dbReference>
<dbReference type="GO" id="GO:0016887">
    <property type="term" value="F:ATP hydrolysis activity"/>
    <property type="evidence" value="ECO:0007669"/>
    <property type="project" value="InterPro"/>
</dbReference>
<dbReference type="GO" id="GO:0008233">
    <property type="term" value="F:peptidase activity"/>
    <property type="evidence" value="ECO:0007669"/>
    <property type="project" value="InterPro"/>
</dbReference>
<dbReference type="GO" id="GO:0036402">
    <property type="term" value="F:proteasome-activating activity"/>
    <property type="evidence" value="ECO:0007669"/>
    <property type="project" value="UniProtKB-UniRule"/>
</dbReference>
<dbReference type="GO" id="GO:0043335">
    <property type="term" value="P:protein unfolding"/>
    <property type="evidence" value="ECO:0007669"/>
    <property type="project" value="UniProtKB-UniRule"/>
</dbReference>
<dbReference type="GO" id="GO:0051603">
    <property type="term" value="P:proteolysis involved in protein catabolic process"/>
    <property type="evidence" value="ECO:0007669"/>
    <property type="project" value="TreeGrafter"/>
</dbReference>
<dbReference type="CDD" id="cd19498">
    <property type="entry name" value="RecA-like_HslU"/>
    <property type="match status" value="1"/>
</dbReference>
<dbReference type="Gene3D" id="1.10.8.60">
    <property type="match status" value="1"/>
</dbReference>
<dbReference type="Gene3D" id="3.40.50.300">
    <property type="entry name" value="P-loop containing nucleotide triphosphate hydrolases"/>
    <property type="match status" value="2"/>
</dbReference>
<dbReference type="HAMAP" id="MF_00249">
    <property type="entry name" value="HslU"/>
    <property type="match status" value="1"/>
</dbReference>
<dbReference type="InterPro" id="IPR003593">
    <property type="entry name" value="AAA+_ATPase"/>
</dbReference>
<dbReference type="InterPro" id="IPR050052">
    <property type="entry name" value="ATP-dep_Clp_protease_ClpX"/>
</dbReference>
<dbReference type="InterPro" id="IPR003959">
    <property type="entry name" value="ATPase_AAA_core"/>
</dbReference>
<dbReference type="InterPro" id="IPR019489">
    <property type="entry name" value="Clp_ATPase_C"/>
</dbReference>
<dbReference type="InterPro" id="IPR004491">
    <property type="entry name" value="HslU"/>
</dbReference>
<dbReference type="InterPro" id="IPR027417">
    <property type="entry name" value="P-loop_NTPase"/>
</dbReference>
<dbReference type="NCBIfam" id="TIGR00390">
    <property type="entry name" value="hslU"/>
    <property type="match status" value="1"/>
</dbReference>
<dbReference type="NCBIfam" id="NF003544">
    <property type="entry name" value="PRK05201.1"/>
    <property type="match status" value="1"/>
</dbReference>
<dbReference type="PANTHER" id="PTHR48102">
    <property type="entry name" value="ATP-DEPENDENT CLP PROTEASE ATP-BINDING SUBUNIT CLPX-LIKE, MITOCHONDRIAL-RELATED"/>
    <property type="match status" value="1"/>
</dbReference>
<dbReference type="PANTHER" id="PTHR48102:SF3">
    <property type="entry name" value="ATP-DEPENDENT PROTEASE ATPASE SUBUNIT HSLU"/>
    <property type="match status" value="1"/>
</dbReference>
<dbReference type="Pfam" id="PF00004">
    <property type="entry name" value="AAA"/>
    <property type="match status" value="1"/>
</dbReference>
<dbReference type="Pfam" id="PF07724">
    <property type="entry name" value="AAA_2"/>
    <property type="match status" value="1"/>
</dbReference>
<dbReference type="SMART" id="SM00382">
    <property type="entry name" value="AAA"/>
    <property type="match status" value="1"/>
</dbReference>
<dbReference type="SMART" id="SM01086">
    <property type="entry name" value="ClpB_D2-small"/>
    <property type="match status" value="1"/>
</dbReference>
<dbReference type="SUPFAM" id="SSF52540">
    <property type="entry name" value="P-loop containing nucleoside triphosphate hydrolases"/>
    <property type="match status" value="1"/>
</dbReference>
<name>HSLU_HELPH</name>
<feature type="chain" id="PRO_1000012749" description="ATP-dependent protease ATPase subunit HslU">
    <location>
        <begin position="1"/>
        <end position="443"/>
    </location>
</feature>
<feature type="binding site" evidence="1">
    <location>
        <position position="20"/>
    </location>
    <ligand>
        <name>ATP</name>
        <dbReference type="ChEBI" id="CHEBI:30616"/>
    </ligand>
</feature>
<feature type="binding site" evidence="1">
    <location>
        <begin position="62"/>
        <end position="67"/>
    </location>
    <ligand>
        <name>ATP</name>
        <dbReference type="ChEBI" id="CHEBI:30616"/>
    </ligand>
</feature>
<feature type="binding site" evidence="1">
    <location>
        <position position="255"/>
    </location>
    <ligand>
        <name>ATP</name>
        <dbReference type="ChEBI" id="CHEBI:30616"/>
    </ligand>
</feature>
<feature type="binding site" evidence="1">
    <location>
        <position position="321"/>
    </location>
    <ligand>
        <name>ATP</name>
        <dbReference type="ChEBI" id="CHEBI:30616"/>
    </ligand>
</feature>
<feature type="binding site" evidence="1">
    <location>
        <position position="393"/>
    </location>
    <ligand>
        <name>ATP</name>
        <dbReference type="ChEBI" id="CHEBI:30616"/>
    </ligand>
</feature>
<reference key="1">
    <citation type="journal article" date="2006" name="Proc. Natl. Acad. Sci. U.S.A.">
        <title>The complete genome sequence of a chronic atrophic gastritis Helicobacter pylori strain: evolution during disease progression.</title>
        <authorList>
            <person name="Oh J.D."/>
            <person name="Kling-Baeckhed H."/>
            <person name="Giannakis M."/>
            <person name="Xu J."/>
            <person name="Fulton R.S."/>
            <person name="Fulton L.A."/>
            <person name="Cordum H.S."/>
            <person name="Wang C."/>
            <person name="Elliott G."/>
            <person name="Edwards J."/>
            <person name="Mardis E.R."/>
            <person name="Engstrand L.G."/>
            <person name="Gordon J.I."/>
        </authorList>
    </citation>
    <scope>NUCLEOTIDE SEQUENCE [LARGE SCALE GENOMIC DNA]</scope>
    <source>
        <strain>HPAG1</strain>
    </source>
</reference>
<comment type="function">
    <text evidence="1">ATPase subunit of a proteasome-like degradation complex; this subunit has chaperone activity. The binding of ATP and its subsequent hydrolysis by HslU are essential for unfolding of protein substrates subsequently hydrolyzed by HslV. HslU recognizes the N-terminal part of its protein substrates and unfolds these before they are guided to HslV for hydrolysis.</text>
</comment>
<comment type="subunit">
    <text evidence="1">A double ring-shaped homohexamer of HslV is capped on each side by a ring-shaped HslU homohexamer. The assembly of the HslU/HslV complex is dependent on binding of ATP.</text>
</comment>
<comment type="subcellular location">
    <subcellularLocation>
        <location evidence="1">Cytoplasm</location>
    </subcellularLocation>
</comment>
<comment type="similarity">
    <text evidence="1">Belongs to the ClpX chaperone family. HslU subfamily.</text>
</comment>
<gene>
    <name evidence="1" type="primary">hslU</name>
    <name type="ordered locus">HPAG1_0490</name>
</gene>
<organism>
    <name type="scientific">Helicobacter pylori (strain HPAG1)</name>
    <dbReference type="NCBI Taxonomy" id="357544"/>
    <lineage>
        <taxon>Bacteria</taxon>
        <taxon>Pseudomonadati</taxon>
        <taxon>Campylobacterota</taxon>
        <taxon>Epsilonproteobacteria</taxon>
        <taxon>Campylobacterales</taxon>
        <taxon>Helicobacteraceae</taxon>
        <taxon>Helicobacter</taxon>
    </lineage>
</organism>
<proteinExistence type="inferred from homology"/>
<sequence length="443" mass="50173">MSKLNMTPREIVAYLDEYIIGQKEAKKSIAIAFRNRYRRLQLEKSLQEEITPKNILMIGSTGVGKTEIARRIAKIMELPFVKVEASKYTEVGFVGRDVESMVRDLVNNSVLLVENEHKEKLKDKIEEAVVEKIAKKLLPPLPNGVSEEKKQEYANSLLKMQQRIVQGELDSREIEIEVRKKSIEIDSNVPPEILRVQENLIKVFHKEQDKVKKTLSVKEAKEALKAEISDTLLDSEAIKMEGLKRAESSGVIFIDEIDKIAVSSKEGSRQDPSKEGVQRDLLPIVEGSVVNTKYGSIKTEHILFIAAGAFHLSKPSDLIPELQGRFPLRVELENLTEEIMYMILTQTKTSIIKQYQALLQVEGVGIAFEDDAIKELAKLSYNANQKSEDIGARRLHTTIEKVLEDISFEAEDYLGQKVTITKELVQSKLEDLVADENLVKYIL</sequence>
<evidence type="ECO:0000255" key="1">
    <source>
        <dbReference type="HAMAP-Rule" id="MF_00249"/>
    </source>
</evidence>